<dbReference type="EMBL" id="CP000627">
    <property type="protein sequence ID" value="ABQ21503.1"/>
    <property type="status" value="ALT_INIT"/>
    <property type="molecule type" value="Genomic_DNA"/>
</dbReference>
<dbReference type="EMBL" id="CP001235">
    <property type="protein sequence ID" value="ACP08633.1"/>
    <property type="status" value="ALT_INIT"/>
    <property type="molecule type" value="Genomic_DNA"/>
</dbReference>
<dbReference type="RefSeq" id="WP_000545810.1">
    <property type="nucleotide sequence ID" value="NZ_JAACZH010000006.1"/>
</dbReference>
<dbReference type="SMR" id="A5F980"/>
<dbReference type="KEGG" id="vco:VC0395_A0128"/>
<dbReference type="KEGG" id="vcr:VC395_0614"/>
<dbReference type="PATRIC" id="fig|345073.21.peg.598"/>
<dbReference type="eggNOG" id="COG1489">
    <property type="taxonomic scope" value="Bacteria"/>
</dbReference>
<dbReference type="HOGENOM" id="CLU_052299_2_0_6"/>
<dbReference type="Proteomes" id="UP000000249">
    <property type="component" value="Chromosome 2"/>
</dbReference>
<dbReference type="GO" id="GO:0003677">
    <property type="term" value="F:DNA binding"/>
    <property type="evidence" value="ECO:0007669"/>
    <property type="project" value="InterPro"/>
</dbReference>
<dbReference type="CDD" id="cd22359">
    <property type="entry name" value="SfsA-like_bacterial"/>
    <property type="match status" value="1"/>
</dbReference>
<dbReference type="FunFam" id="2.40.50.580:FF:000001">
    <property type="entry name" value="Sugar fermentation stimulation protein A"/>
    <property type="match status" value="1"/>
</dbReference>
<dbReference type="FunFam" id="3.40.1350.60:FF:000001">
    <property type="entry name" value="Sugar fermentation stimulation protein A"/>
    <property type="match status" value="1"/>
</dbReference>
<dbReference type="Gene3D" id="2.40.50.580">
    <property type="match status" value="1"/>
</dbReference>
<dbReference type="Gene3D" id="3.40.1350.60">
    <property type="match status" value="1"/>
</dbReference>
<dbReference type="HAMAP" id="MF_00095">
    <property type="entry name" value="SfsA"/>
    <property type="match status" value="1"/>
</dbReference>
<dbReference type="InterPro" id="IPR005224">
    <property type="entry name" value="SfsA"/>
</dbReference>
<dbReference type="InterPro" id="IPR040452">
    <property type="entry name" value="SfsA_C"/>
</dbReference>
<dbReference type="InterPro" id="IPR041465">
    <property type="entry name" value="SfsA_N"/>
</dbReference>
<dbReference type="NCBIfam" id="TIGR00230">
    <property type="entry name" value="sfsA"/>
    <property type="match status" value="1"/>
</dbReference>
<dbReference type="PANTHER" id="PTHR30545">
    <property type="entry name" value="SUGAR FERMENTATION STIMULATION PROTEIN A"/>
    <property type="match status" value="1"/>
</dbReference>
<dbReference type="PANTHER" id="PTHR30545:SF2">
    <property type="entry name" value="SUGAR FERMENTATION STIMULATION PROTEIN A"/>
    <property type="match status" value="1"/>
</dbReference>
<dbReference type="Pfam" id="PF03749">
    <property type="entry name" value="SfsA"/>
    <property type="match status" value="1"/>
</dbReference>
<dbReference type="Pfam" id="PF17746">
    <property type="entry name" value="SfsA_N"/>
    <property type="match status" value="1"/>
</dbReference>
<sequence length="244" mass="26944">MHFSPPLQKGTLLKRYKRFLADVALEDGSVITMHCANTGAMTGCAEPGSTVWFSTSDNPKRKYAHSWELTQTQAGHWICVNTARANALVVEAILAGEIQQLRGYDALSTEVKYGHENSRIDILLKSDSQPHCFIEVKSVTLLDEIQGDKGQGYFPDAVTTRGQKHLRELAEVAKDGSRSILLFAVLHSGIEKVAPALHIDANYSQLLKAAQEAGVEVLCYKASLSKHEIRMVSEVKFAYQVTKN</sequence>
<name>SFSA_VIBC3</name>
<reference key="1">
    <citation type="submission" date="2007-03" db="EMBL/GenBank/DDBJ databases">
        <authorList>
            <person name="Heidelberg J."/>
        </authorList>
    </citation>
    <scope>NUCLEOTIDE SEQUENCE [LARGE SCALE GENOMIC DNA]</scope>
    <source>
        <strain>ATCC 39541 / Classical Ogawa 395 / O395</strain>
    </source>
</reference>
<reference key="2">
    <citation type="journal article" date="2008" name="PLoS ONE">
        <title>A recalibrated molecular clock and independent origins for the cholera pandemic clones.</title>
        <authorList>
            <person name="Feng L."/>
            <person name="Reeves P.R."/>
            <person name="Lan R."/>
            <person name="Ren Y."/>
            <person name="Gao C."/>
            <person name="Zhou Z."/>
            <person name="Ren Y."/>
            <person name="Cheng J."/>
            <person name="Wang W."/>
            <person name="Wang J."/>
            <person name="Qian W."/>
            <person name="Li D."/>
            <person name="Wang L."/>
        </authorList>
    </citation>
    <scope>NUCLEOTIDE SEQUENCE [LARGE SCALE GENOMIC DNA]</scope>
    <source>
        <strain>ATCC 39541 / Classical Ogawa 395 / O395</strain>
    </source>
</reference>
<comment type="similarity">
    <text evidence="1">Belongs to the SfsA family.</text>
</comment>
<comment type="sequence caution" evidence="2">
    <conflict type="erroneous initiation">
        <sequence resource="EMBL-CDS" id="ABQ21503"/>
    </conflict>
</comment>
<comment type="sequence caution" evidence="2">
    <conflict type="erroneous initiation">
        <sequence resource="EMBL-CDS" id="ACP08633"/>
    </conflict>
</comment>
<proteinExistence type="inferred from homology"/>
<protein>
    <recommendedName>
        <fullName evidence="1">Sugar fermentation stimulation protein homolog</fullName>
    </recommendedName>
</protein>
<feature type="chain" id="PRO_0000340162" description="Sugar fermentation stimulation protein homolog">
    <location>
        <begin position="1"/>
        <end position="244"/>
    </location>
</feature>
<evidence type="ECO:0000255" key="1">
    <source>
        <dbReference type="HAMAP-Rule" id="MF_00095"/>
    </source>
</evidence>
<evidence type="ECO:0000305" key="2"/>
<organism>
    <name type="scientific">Vibrio cholerae serotype O1 (strain ATCC 39541 / Classical Ogawa 395 / O395)</name>
    <dbReference type="NCBI Taxonomy" id="345073"/>
    <lineage>
        <taxon>Bacteria</taxon>
        <taxon>Pseudomonadati</taxon>
        <taxon>Pseudomonadota</taxon>
        <taxon>Gammaproteobacteria</taxon>
        <taxon>Vibrionales</taxon>
        <taxon>Vibrionaceae</taxon>
        <taxon>Vibrio</taxon>
    </lineage>
</organism>
<accession>A5F980</accession>
<accession>C3LXC3</accession>
<gene>
    <name evidence="1" type="primary">sfsA</name>
    <name type="ordered locus">VC0395_A0128</name>
    <name type="ordered locus">VC395_0614</name>
</gene>